<dbReference type="EMBL" id="CP000872">
    <property type="protein sequence ID" value="ABX61257.1"/>
    <property type="molecule type" value="Genomic_DNA"/>
</dbReference>
<dbReference type="RefSeq" id="WP_004687882.1">
    <property type="nucleotide sequence ID" value="NC_010103.1"/>
</dbReference>
<dbReference type="SMR" id="A9M798"/>
<dbReference type="KEGG" id="bcs:BCAN_A0158"/>
<dbReference type="HOGENOM" id="CLU_105066_2_0_5"/>
<dbReference type="Proteomes" id="UP000001385">
    <property type="component" value="Chromosome I"/>
</dbReference>
<dbReference type="GO" id="GO:0005694">
    <property type="term" value="C:chromosome"/>
    <property type="evidence" value="ECO:0007669"/>
    <property type="project" value="InterPro"/>
</dbReference>
<dbReference type="GO" id="GO:0005829">
    <property type="term" value="C:cytosol"/>
    <property type="evidence" value="ECO:0007669"/>
    <property type="project" value="TreeGrafter"/>
</dbReference>
<dbReference type="GO" id="GO:0003677">
    <property type="term" value="F:DNA binding"/>
    <property type="evidence" value="ECO:0007669"/>
    <property type="project" value="UniProtKB-UniRule"/>
</dbReference>
<dbReference type="GO" id="GO:0030527">
    <property type="term" value="F:structural constituent of chromatin"/>
    <property type="evidence" value="ECO:0007669"/>
    <property type="project" value="InterPro"/>
</dbReference>
<dbReference type="GO" id="GO:0006310">
    <property type="term" value="P:DNA recombination"/>
    <property type="evidence" value="ECO:0007669"/>
    <property type="project" value="UniProtKB-UniRule"/>
</dbReference>
<dbReference type="GO" id="GO:0006355">
    <property type="term" value="P:regulation of DNA-templated transcription"/>
    <property type="evidence" value="ECO:0007669"/>
    <property type="project" value="UniProtKB-UniRule"/>
</dbReference>
<dbReference type="GO" id="GO:0006417">
    <property type="term" value="P:regulation of translation"/>
    <property type="evidence" value="ECO:0007669"/>
    <property type="project" value="UniProtKB-UniRule"/>
</dbReference>
<dbReference type="CDD" id="cd13836">
    <property type="entry name" value="IHF_B"/>
    <property type="match status" value="1"/>
</dbReference>
<dbReference type="Gene3D" id="4.10.520.10">
    <property type="entry name" value="IHF-like DNA-binding proteins"/>
    <property type="match status" value="1"/>
</dbReference>
<dbReference type="HAMAP" id="MF_00381">
    <property type="entry name" value="IHF_beta"/>
    <property type="match status" value="1"/>
</dbReference>
<dbReference type="InterPro" id="IPR000119">
    <property type="entry name" value="Hist_DNA-bd"/>
</dbReference>
<dbReference type="InterPro" id="IPR020816">
    <property type="entry name" value="Histone-like_DNA-bd_CS"/>
</dbReference>
<dbReference type="InterPro" id="IPR010992">
    <property type="entry name" value="IHF-like_DNA-bd_dom_sf"/>
</dbReference>
<dbReference type="InterPro" id="IPR005685">
    <property type="entry name" value="IHF_beta"/>
</dbReference>
<dbReference type="NCBIfam" id="TIGR00988">
    <property type="entry name" value="hip"/>
    <property type="match status" value="1"/>
</dbReference>
<dbReference type="NCBIfam" id="NF001222">
    <property type="entry name" value="PRK00199.1"/>
    <property type="match status" value="1"/>
</dbReference>
<dbReference type="PANTHER" id="PTHR33175">
    <property type="entry name" value="DNA-BINDING PROTEIN HU"/>
    <property type="match status" value="1"/>
</dbReference>
<dbReference type="PANTHER" id="PTHR33175:SF5">
    <property type="entry name" value="INTEGRATION HOST FACTOR SUBUNIT BETA"/>
    <property type="match status" value="1"/>
</dbReference>
<dbReference type="Pfam" id="PF00216">
    <property type="entry name" value="Bac_DNA_binding"/>
    <property type="match status" value="1"/>
</dbReference>
<dbReference type="PRINTS" id="PR01727">
    <property type="entry name" value="DNABINDINGHU"/>
</dbReference>
<dbReference type="SMART" id="SM00411">
    <property type="entry name" value="BHL"/>
    <property type="match status" value="1"/>
</dbReference>
<dbReference type="SUPFAM" id="SSF47729">
    <property type="entry name" value="IHF-like DNA-binding proteins"/>
    <property type="match status" value="1"/>
</dbReference>
<dbReference type="PROSITE" id="PS00045">
    <property type="entry name" value="HISTONE_LIKE"/>
    <property type="match status" value="1"/>
</dbReference>
<gene>
    <name evidence="1" type="primary">ihfB</name>
    <name evidence="1" type="synonym">himD</name>
    <name type="ordered locus">BCAN_A0158</name>
</gene>
<organism>
    <name type="scientific">Brucella canis (strain ATCC 23365 / NCTC 10854 / RM-666)</name>
    <dbReference type="NCBI Taxonomy" id="483179"/>
    <lineage>
        <taxon>Bacteria</taxon>
        <taxon>Pseudomonadati</taxon>
        <taxon>Pseudomonadota</taxon>
        <taxon>Alphaproteobacteria</taxon>
        <taxon>Hyphomicrobiales</taxon>
        <taxon>Brucellaceae</taxon>
        <taxon>Brucella/Ochrobactrum group</taxon>
        <taxon>Brucella</taxon>
    </lineage>
</organism>
<evidence type="ECO:0000255" key="1">
    <source>
        <dbReference type="HAMAP-Rule" id="MF_00381"/>
    </source>
</evidence>
<name>IHFB_BRUC2</name>
<comment type="function">
    <text evidence="1">This protein is one of the two subunits of integration host factor, a specific DNA-binding protein that functions in genetic recombination as well as in transcriptional and translational control.</text>
</comment>
<comment type="subunit">
    <text evidence="1">Heterodimer of an alpha and a beta chain.</text>
</comment>
<comment type="similarity">
    <text evidence="1">Belongs to the bacterial histone-like protein family.</text>
</comment>
<reference key="1">
    <citation type="submission" date="2007-10" db="EMBL/GenBank/DDBJ databases">
        <title>Brucella canis ATCC 23365 whole genome shotgun sequencing project.</title>
        <authorList>
            <person name="Setubal J.C."/>
            <person name="Bowns C."/>
            <person name="Boyle S."/>
            <person name="Crasta O.R."/>
            <person name="Czar M.J."/>
            <person name="Dharmanolla C."/>
            <person name="Gillespie J.J."/>
            <person name="Kenyon R.W."/>
            <person name="Lu J."/>
            <person name="Mane S."/>
            <person name="Mohapatra S."/>
            <person name="Nagrani S."/>
            <person name="Purkayastha A."/>
            <person name="Rajasimha H.K."/>
            <person name="Shallom J.M."/>
            <person name="Shallom S."/>
            <person name="Shukla M."/>
            <person name="Snyder E.E."/>
            <person name="Sobral B.W."/>
            <person name="Wattam A.R."/>
            <person name="Will R."/>
            <person name="Williams K."/>
            <person name="Yoo H."/>
            <person name="Bruce D."/>
            <person name="Detter C."/>
            <person name="Munk C."/>
            <person name="Brettin T.S."/>
        </authorList>
    </citation>
    <scope>NUCLEOTIDE SEQUENCE [LARGE SCALE GENOMIC DNA]</scope>
    <source>
        <strain>ATCC 23365 / NCTC 10854 / RM-666</strain>
    </source>
</reference>
<accession>A9M798</accession>
<protein>
    <recommendedName>
        <fullName evidence="1">Integration host factor subunit beta</fullName>
        <shortName evidence="1">IHF-beta</shortName>
    </recommendedName>
</protein>
<sequence>MIKSELVQIIASRNPHLFQRDVENIVGAVFDEITNALAEGNRVELRGFGAFSVKNRPARSGRNPRTGETVDVEEKWVPFFKTGKELRDRLNGAV</sequence>
<proteinExistence type="inferred from homology"/>
<keyword id="KW-0233">DNA recombination</keyword>
<keyword id="KW-0238">DNA-binding</keyword>
<keyword id="KW-1185">Reference proteome</keyword>
<keyword id="KW-0804">Transcription</keyword>
<keyword id="KW-0805">Transcription regulation</keyword>
<keyword id="KW-0810">Translation regulation</keyword>
<feature type="chain" id="PRO_1000080041" description="Integration host factor subunit beta">
    <location>
        <begin position="1"/>
        <end position="94"/>
    </location>
</feature>